<keyword id="KW-0133">Cell shape</keyword>
<keyword id="KW-0961">Cell wall biogenesis/degradation</keyword>
<keyword id="KW-0413">Isomerase</keyword>
<keyword id="KW-0573">Peptidoglycan synthesis</keyword>
<keyword id="KW-1185">Reference proteome</keyword>
<organism>
    <name type="scientific">Caldanaerobacter subterraneus subsp. tengcongensis (strain DSM 15242 / JCM 11007 / NBRC 100824 / MB4)</name>
    <name type="common">Thermoanaerobacter tengcongensis</name>
    <dbReference type="NCBI Taxonomy" id="273068"/>
    <lineage>
        <taxon>Bacteria</taxon>
        <taxon>Bacillati</taxon>
        <taxon>Bacillota</taxon>
        <taxon>Clostridia</taxon>
        <taxon>Thermoanaerobacterales</taxon>
        <taxon>Thermoanaerobacteraceae</taxon>
        <taxon>Caldanaerobacter</taxon>
    </lineage>
</organism>
<accession>Q8RC52</accession>
<comment type="function">
    <text evidence="1">Provides the (R)-glutamate required for cell wall biosynthesis.</text>
</comment>
<comment type="catalytic activity">
    <reaction evidence="1">
        <text>L-glutamate = D-glutamate</text>
        <dbReference type="Rhea" id="RHEA:12813"/>
        <dbReference type="ChEBI" id="CHEBI:29985"/>
        <dbReference type="ChEBI" id="CHEBI:29986"/>
        <dbReference type="EC" id="5.1.1.3"/>
    </reaction>
</comment>
<comment type="pathway">
    <text evidence="1">Cell wall biogenesis; peptidoglycan biosynthesis.</text>
</comment>
<comment type="similarity">
    <text evidence="1">Belongs to the aspartate/glutamate racemases family.</text>
</comment>
<gene>
    <name evidence="1" type="primary">murI2</name>
    <name type="ordered locus">TTE0595</name>
</gene>
<dbReference type="EC" id="5.1.1.3" evidence="1"/>
<dbReference type="EMBL" id="AE008691">
    <property type="protein sequence ID" value="AAM23865.1"/>
    <property type="molecule type" value="Genomic_DNA"/>
</dbReference>
<dbReference type="RefSeq" id="WP_011025010.1">
    <property type="nucleotide sequence ID" value="NC_003869.1"/>
</dbReference>
<dbReference type="SMR" id="Q8RC52"/>
<dbReference type="STRING" id="273068.TTE0595"/>
<dbReference type="KEGG" id="tte:TTE0595"/>
<dbReference type="eggNOG" id="COG0796">
    <property type="taxonomic scope" value="Bacteria"/>
</dbReference>
<dbReference type="HOGENOM" id="CLU_052344_0_2_9"/>
<dbReference type="OrthoDB" id="9801055at2"/>
<dbReference type="UniPathway" id="UPA00219"/>
<dbReference type="Proteomes" id="UP000000555">
    <property type="component" value="Chromosome"/>
</dbReference>
<dbReference type="GO" id="GO:0008881">
    <property type="term" value="F:glutamate racemase activity"/>
    <property type="evidence" value="ECO:0007669"/>
    <property type="project" value="UniProtKB-UniRule"/>
</dbReference>
<dbReference type="GO" id="GO:0071555">
    <property type="term" value="P:cell wall organization"/>
    <property type="evidence" value="ECO:0007669"/>
    <property type="project" value="UniProtKB-KW"/>
</dbReference>
<dbReference type="GO" id="GO:0009252">
    <property type="term" value="P:peptidoglycan biosynthetic process"/>
    <property type="evidence" value="ECO:0007669"/>
    <property type="project" value="UniProtKB-UniRule"/>
</dbReference>
<dbReference type="GO" id="GO:0008360">
    <property type="term" value="P:regulation of cell shape"/>
    <property type="evidence" value="ECO:0007669"/>
    <property type="project" value="UniProtKB-KW"/>
</dbReference>
<dbReference type="FunFam" id="3.40.50.1860:FF:000001">
    <property type="entry name" value="Glutamate racemase"/>
    <property type="match status" value="1"/>
</dbReference>
<dbReference type="Gene3D" id="3.40.50.1860">
    <property type="match status" value="2"/>
</dbReference>
<dbReference type="HAMAP" id="MF_00258">
    <property type="entry name" value="Glu_racemase"/>
    <property type="match status" value="1"/>
</dbReference>
<dbReference type="InterPro" id="IPR015942">
    <property type="entry name" value="Asp/Glu/hydantoin_racemase"/>
</dbReference>
<dbReference type="InterPro" id="IPR001920">
    <property type="entry name" value="Asp/Glu_race"/>
</dbReference>
<dbReference type="InterPro" id="IPR033134">
    <property type="entry name" value="Asp/Glu_racemase_AS_2"/>
</dbReference>
<dbReference type="InterPro" id="IPR004391">
    <property type="entry name" value="Glu_race"/>
</dbReference>
<dbReference type="NCBIfam" id="TIGR00067">
    <property type="entry name" value="glut_race"/>
    <property type="match status" value="1"/>
</dbReference>
<dbReference type="PANTHER" id="PTHR21198">
    <property type="entry name" value="GLUTAMATE RACEMASE"/>
    <property type="match status" value="1"/>
</dbReference>
<dbReference type="PANTHER" id="PTHR21198:SF2">
    <property type="entry name" value="GLUTAMATE RACEMASE"/>
    <property type="match status" value="1"/>
</dbReference>
<dbReference type="Pfam" id="PF01177">
    <property type="entry name" value="Asp_Glu_race"/>
    <property type="match status" value="1"/>
</dbReference>
<dbReference type="SUPFAM" id="SSF53681">
    <property type="entry name" value="Aspartate/glutamate racemase"/>
    <property type="match status" value="2"/>
</dbReference>
<dbReference type="PROSITE" id="PS00924">
    <property type="entry name" value="ASP_GLU_RACEMASE_2"/>
    <property type="match status" value="1"/>
</dbReference>
<proteinExistence type="inferred from homology"/>
<sequence>MDSRPIGVFDSGVGGLTVLKRLIQVLPEEDYIYFGDTKRVPYGDRSKEEIELFAGQIINFMKEKNVKAVVIACNTTCATIDKGKYDIELFDVLKAGAESGVYCTKNKKVGVIATKRTVESRSYEINIKSINPQIEVYQKACPEFVPLIEKGLYNSHLAYKAAKDCLEEFKGKEIDTLILGCTHYPLMEPIIKAIMGDGVKVVDPAVRLSHEVKEYLERSRILNFGKKGKIEFFVSGDAENFKRAAEMVLGKKIDEVFIVDIERY</sequence>
<protein>
    <recommendedName>
        <fullName evidence="1">Glutamate racemase 2</fullName>
        <ecNumber evidence="1">5.1.1.3</ecNumber>
    </recommendedName>
</protein>
<evidence type="ECO:0000255" key="1">
    <source>
        <dbReference type="HAMAP-Rule" id="MF_00258"/>
    </source>
</evidence>
<feature type="chain" id="PRO_0000095527" description="Glutamate racemase 2">
    <location>
        <begin position="1"/>
        <end position="264"/>
    </location>
</feature>
<feature type="active site" description="Proton donor/acceptor" evidence="1">
    <location>
        <position position="73"/>
    </location>
</feature>
<feature type="active site" description="Proton donor/acceptor" evidence="1">
    <location>
        <position position="181"/>
    </location>
</feature>
<feature type="binding site" evidence="1">
    <location>
        <begin position="10"/>
        <end position="11"/>
    </location>
    <ligand>
        <name>substrate</name>
    </ligand>
</feature>
<feature type="binding site" evidence="1">
    <location>
        <begin position="42"/>
        <end position="43"/>
    </location>
    <ligand>
        <name>substrate</name>
    </ligand>
</feature>
<feature type="binding site" evidence="1">
    <location>
        <begin position="74"/>
        <end position="75"/>
    </location>
    <ligand>
        <name>substrate</name>
    </ligand>
</feature>
<feature type="binding site" evidence="1">
    <location>
        <begin position="182"/>
        <end position="183"/>
    </location>
    <ligand>
        <name>substrate</name>
    </ligand>
</feature>
<reference key="1">
    <citation type="journal article" date="2002" name="Genome Res.">
        <title>A complete sequence of the T. tengcongensis genome.</title>
        <authorList>
            <person name="Bao Q."/>
            <person name="Tian Y."/>
            <person name="Li W."/>
            <person name="Xu Z."/>
            <person name="Xuan Z."/>
            <person name="Hu S."/>
            <person name="Dong W."/>
            <person name="Yang J."/>
            <person name="Chen Y."/>
            <person name="Xue Y."/>
            <person name="Xu Y."/>
            <person name="Lai X."/>
            <person name="Huang L."/>
            <person name="Dong X."/>
            <person name="Ma Y."/>
            <person name="Ling L."/>
            <person name="Tan H."/>
            <person name="Chen R."/>
            <person name="Wang J."/>
            <person name="Yu J."/>
            <person name="Yang H."/>
        </authorList>
    </citation>
    <scope>NUCLEOTIDE SEQUENCE [LARGE SCALE GENOMIC DNA]</scope>
    <source>
        <strain>DSM 15242 / JCM 11007 / NBRC 100824 / MB4</strain>
    </source>
</reference>
<name>MURI2_CALS4</name>